<feature type="chain" id="PRO_0000153029" description="Probable GTP 3',8-cyclase">
    <location>
        <begin position="1"/>
        <end position="313"/>
    </location>
</feature>
<feature type="domain" description="Radical SAM core" evidence="2">
    <location>
        <begin position="4"/>
        <end position="224"/>
    </location>
</feature>
<feature type="binding site" evidence="1">
    <location>
        <position position="13"/>
    </location>
    <ligand>
        <name>GTP</name>
        <dbReference type="ChEBI" id="CHEBI:37565"/>
    </ligand>
</feature>
<feature type="binding site" evidence="1">
    <location>
        <position position="20"/>
    </location>
    <ligand>
        <name>[4Fe-4S] cluster</name>
        <dbReference type="ChEBI" id="CHEBI:49883"/>
        <label>1</label>
        <note>4Fe-4S-S-AdoMet</note>
    </ligand>
</feature>
<feature type="binding site" evidence="1">
    <location>
        <position position="24"/>
    </location>
    <ligand>
        <name>[4Fe-4S] cluster</name>
        <dbReference type="ChEBI" id="CHEBI:49883"/>
        <label>1</label>
        <note>4Fe-4S-S-AdoMet</note>
    </ligand>
</feature>
<feature type="binding site" evidence="1">
    <location>
        <position position="27"/>
    </location>
    <ligand>
        <name>[4Fe-4S] cluster</name>
        <dbReference type="ChEBI" id="CHEBI:49883"/>
        <label>1</label>
        <note>4Fe-4S-S-AdoMet</note>
    </ligand>
</feature>
<feature type="binding site" evidence="1">
    <location>
        <position position="60"/>
    </location>
    <ligand>
        <name>GTP</name>
        <dbReference type="ChEBI" id="CHEBI:37565"/>
    </ligand>
</feature>
<feature type="binding site" evidence="1">
    <location>
        <position position="64"/>
    </location>
    <ligand>
        <name>S-adenosyl-L-methionine</name>
        <dbReference type="ChEBI" id="CHEBI:59789"/>
    </ligand>
</feature>
<feature type="binding site" evidence="1">
    <location>
        <position position="90"/>
    </location>
    <ligand>
        <name>GTP</name>
        <dbReference type="ChEBI" id="CHEBI:37565"/>
    </ligand>
</feature>
<feature type="binding site" evidence="1">
    <location>
        <position position="114"/>
    </location>
    <ligand>
        <name>S-adenosyl-L-methionine</name>
        <dbReference type="ChEBI" id="CHEBI:59789"/>
    </ligand>
</feature>
<feature type="binding site" evidence="1">
    <location>
        <position position="151"/>
    </location>
    <ligand>
        <name>GTP</name>
        <dbReference type="ChEBI" id="CHEBI:37565"/>
    </ligand>
</feature>
<feature type="binding site" evidence="1">
    <location>
        <position position="244"/>
    </location>
    <ligand>
        <name>[4Fe-4S] cluster</name>
        <dbReference type="ChEBI" id="CHEBI:49883"/>
        <label>2</label>
        <note>4Fe-4S-substrate</note>
    </ligand>
</feature>
<feature type="binding site" evidence="1">
    <location>
        <position position="247"/>
    </location>
    <ligand>
        <name>[4Fe-4S] cluster</name>
        <dbReference type="ChEBI" id="CHEBI:49883"/>
        <label>2</label>
        <note>4Fe-4S-substrate</note>
    </ligand>
</feature>
<feature type="binding site" evidence="1">
    <location>
        <begin position="249"/>
        <end position="251"/>
    </location>
    <ligand>
        <name>GTP</name>
        <dbReference type="ChEBI" id="CHEBI:37565"/>
    </ligand>
</feature>
<feature type="binding site" evidence="1">
    <location>
        <position position="261"/>
    </location>
    <ligand>
        <name>[4Fe-4S] cluster</name>
        <dbReference type="ChEBI" id="CHEBI:49883"/>
        <label>2</label>
        <note>4Fe-4S-substrate</note>
    </ligand>
</feature>
<protein>
    <recommendedName>
        <fullName evidence="1">Probable GTP 3',8-cyclase</fullName>
        <ecNumber evidence="1">4.1.99.22</ecNumber>
    </recommendedName>
    <alternativeName>
        <fullName evidence="1">Molybdenum cofactor biosynthesis protein A</fullName>
    </alternativeName>
</protein>
<name>MOAA_SULTO</name>
<organism>
    <name type="scientific">Sulfurisphaera tokodaii (strain DSM 16993 / JCM 10545 / NBRC 100140 / 7)</name>
    <name type="common">Sulfolobus tokodaii</name>
    <dbReference type="NCBI Taxonomy" id="273063"/>
    <lineage>
        <taxon>Archaea</taxon>
        <taxon>Thermoproteota</taxon>
        <taxon>Thermoprotei</taxon>
        <taxon>Sulfolobales</taxon>
        <taxon>Sulfolobaceae</taxon>
        <taxon>Sulfurisphaera</taxon>
    </lineage>
</organism>
<reference key="1">
    <citation type="journal article" date="2001" name="DNA Res.">
        <title>Complete genome sequence of an aerobic thermoacidophilic Crenarchaeon, Sulfolobus tokodaii strain7.</title>
        <authorList>
            <person name="Kawarabayasi Y."/>
            <person name="Hino Y."/>
            <person name="Horikawa H."/>
            <person name="Jin-no K."/>
            <person name="Takahashi M."/>
            <person name="Sekine M."/>
            <person name="Baba S."/>
            <person name="Ankai A."/>
            <person name="Kosugi H."/>
            <person name="Hosoyama A."/>
            <person name="Fukui S."/>
            <person name="Nagai Y."/>
            <person name="Nishijima K."/>
            <person name="Otsuka R."/>
            <person name="Nakazawa H."/>
            <person name="Takamiya M."/>
            <person name="Kato Y."/>
            <person name="Yoshizawa T."/>
            <person name="Tanaka T."/>
            <person name="Kudoh Y."/>
            <person name="Yamazaki J."/>
            <person name="Kushida N."/>
            <person name="Oguchi A."/>
            <person name="Aoki K."/>
            <person name="Masuda S."/>
            <person name="Yanagii M."/>
            <person name="Nishimura M."/>
            <person name="Yamagishi A."/>
            <person name="Oshima T."/>
            <person name="Kikuchi H."/>
        </authorList>
    </citation>
    <scope>NUCLEOTIDE SEQUENCE [LARGE SCALE GENOMIC DNA]</scope>
    <source>
        <strain>DSM 16993 / JCM 10545 / NBRC 100140 / 7</strain>
    </source>
</reference>
<sequence length="313" mass="35779">MIDRFGRSIEDLRVTLTHVCNFSCFFCHMEGEDNSQSLLSPEEISLVAKVGIEYGIRSVKLTGGEPTLRRDLLQIIRELKDVGIKEVSMTTNGVLLSTLAWKLKEVGLDRVNVSLHSLDKQLFKEITGVDALDKVIEGIKEAIKAGLRPLKLNFVLTKKNISQLDNIINFAIETGVDELHLIELHPVGLGKNTFEYHEKLESIEKILKERADKIEIRSKHYRPRYYLNNLVIEVVKPYANPIFCAGCNRIRLTADGKLKTCLYRQDKEIDIMDILRGDFSLEEKIELIREAYEIAIAIREPNFKYKVESYAPS</sequence>
<dbReference type="EC" id="4.1.99.22" evidence="1"/>
<dbReference type="EMBL" id="BA000023">
    <property type="protein sequence ID" value="BAB66449.1"/>
    <property type="molecule type" value="Genomic_DNA"/>
</dbReference>
<dbReference type="RefSeq" id="WP_010979427.1">
    <property type="nucleotide sequence ID" value="NC_003106.2"/>
</dbReference>
<dbReference type="SMR" id="Q971H1"/>
<dbReference type="STRING" id="273063.STK_13830"/>
<dbReference type="GeneID" id="1459411"/>
<dbReference type="KEGG" id="sto:STK_13830"/>
<dbReference type="PATRIC" id="fig|273063.9.peg.1583"/>
<dbReference type="eggNOG" id="arCOG00930">
    <property type="taxonomic scope" value="Archaea"/>
</dbReference>
<dbReference type="OrthoDB" id="6925at2157"/>
<dbReference type="UniPathway" id="UPA00344"/>
<dbReference type="Proteomes" id="UP000001015">
    <property type="component" value="Chromosome"/>
</dbReference>
<dbReference type="GO" id="GO:0051539">
    <property type="term" value="F:4 iron, 4 sulfur cluster binding"/>
    <property type="evidence" value="ECO:0007669"/>
    <property type="project" value="UniProtKB-UniRule"/>
</dbReference>
<dbReference type="GO" id="GO:0061799">
    <property type="term" value="F:cyclic pyranopterin monophosphate synthase activity"/>
    <property type="evidence" value="ECO:0007669"/>
    <property type="project" value="TreeGrafter"/>
</dbReference>
<dbReference type="GO" id="GO:0061798">
    <property type="term" value="F:GTP 3',8'-cyclase activity"/>
    <property type="evidence" value="ECO:0007669"/>
    <property type="project" value="UniProtKB-UniRule"/>
</dbReference>
<dbReference type="GO" id="GO:0005525">
    <property type="term" value="F:GTP binding"/>
    <property type="evidence" value="ECO:0007669"/>
    <property type="project" value="UniProtKB-UniRule"/>
</dbReference>
<dbReference type="GO" id="GO:0046872">
    <property type="term" value="F:metal ion binding"/>
    <property type="evidence" value="ECO:0007669"/>
    <property type="project" value="UniProtKB-KW"/>
</dbReference>
<dbReference type="GO" id="GO:1904047">
    <property type="term" value="F:S-adenosyl-L-methionine binding"/>
    <property type="evidence" value="ECO:0007669"/>
    <property type="project" value="UniProtKB-UniRule"/>
</dbReference>
<dbReference type="GO" id="GO:0006777">
    <property type="term" value="P:Mo-molybdopterin cofactor biosynthetic process"/>
    <property type="evidence" value="ECO:0007669"/>
    <property type="project" value="UniProtKB-UniRule"/>
</dbReference>
<dbReference type="CDD" id="cd01335">
    <property type="entry name" value="Radical_SAM"/>
    <property type="match status" value="1"/>
</dbReference>
<dbReference type="CDD" id="cd21117">
    <property type="entry name" value="Twitch_MoaA"/>
    <property type="match status" value="1"/>
</dbReference>
<dbReference type="Gene3D" id="3.20.20.70">
    <property type="entry name" value="Aldolase class I"/>
    <property type="match status" value="1"/>
</dbReference>
<dbReference type="HAMAP" id="MF_01225_A">
    <property type="entry name" value="MoaA_A"/>
    <property type="match status" value="1"/>
</dbReference>
<dbReference type="InterPro" id="IPR013785">
    <property type="entry name" value="Aldolase_TIM"/>
</dbReference>
<dbReference type="InterPro" id="IPR006638">
    <property type="entry name" value="Elp3/MiaA/NifB-like_rSAM"/>
</dbReference>
<dbReference type="InterPro" id="IPR013485">
    <property type="entry name" value="MoaA_arc"/>
</dbReference>
<dbReference type="InterPro" id="IPR000385">
    <property type="entry name" value="MoaA_NifB_PqqE_Fe-S-bd_CS"/>
</dbReference>
<dbReference type="InterPro" id="IPR010505">
    <property type="entry name" value="MoaA_twitch"/>
</dbReference>
<dbReference type="InterPro" id="IPR050105">
    <property type="entry name" value="MoCo_biosynth_MoaA/MoaC"/>
</dbReference>
<dbReference type="InterPro" id="IPR007197">
    <property type="entry name" value="rSAM"/>
</dbReference>
<dbReference type="NCBIfam" id="TIGR02668">
    <property type="entry name" value="moaA_archaeal"/>
    <property type="match status" value="1"/>
</dbReference>
<dbReference type="NCBIfam" id="NF001199">
    <property type="entry name" value="PRK00164.2-1"/>
    <property type="match status" value="1"/>
</dbReference>
<dbReference type="PANTHER" id="PTHR22960:SF0">
    <property type="entry name" value="MOLYBDENUM COFACTOR BIOSYNTHESIS PROTEIN 1"/>
    <property type="match status" value="1"/>
</dbReference>
<dbReference type="PANTHER" id="PTHR22960">
    <property type="entry name" value="MOLYBDOPTERIN COFACTOR SYNTHESIS PROTEIN A"/>
    <property type="match status" value="1"/>
</dbReference>
<dbReference type="Pfam" id="PF06463">
    <property type="entry name" value="Mob_synth_C"/>
    <property type="match status" value="1"/>
</dbReference>
<dbReference type="Pfam" id="PF04055">
    <property type="entry name" value="Radical_SAM"/>
    <property type="match status" value="1"/>
</dbReference>
<dbReference type="SFLD" id="SFLDG01383">
    <property type="entry name" value="cyclic_pyranopterin_phosphate"/>
    <property type="match status" value="1"/>
</dbReference>
<dbReference type="SFLD" id="SFLDG01072">
    <property type="entry name" value="dehydrogenase_like"/>
    <property type="match status" value="1"/>
</dbReference>
<dbReference type="SMART" id="SM00729">
    <property type="entry name" value="Elp3"/>
    <property type="match status" value="1"/>
</dbReference>
<dbReference type="SUPFAM" id="SSF102114">
    <property type="entry name" value="Radical SAM enzymes"/>
    <property type="match status" value="1"/>
</dbReference>
<dbReference type="PROSITE" id="PS01305">
    <property type="entry name" value="MOAA_NIFB_PQQE"/>
    <property type="match status" value="1"/>
</dbReference>
<dbReference type="PROSITE" id="PS51918">
    <property type="entry name" value="RADICAL_SAM"/>
    <property type="match status" value="1"/>
</dbReference>
<evidence type="ECO:0000255" key="1">
    <source>
        <dbReference type="HAMAP-Rule" id="MF_01225"/>
    </source>
</evidence>
<evidence type="ECO:0000255" key="2">
    <source>
        <dbReference type="PROSITE-ProRule" id="PRU01266"/>
    </source>
</evidence>
<proteinExistence type="inferred from homology"/>
<gene>
    <name evidence="1" type="primary">moaA</name>
    <name type="ordered locus">STK_13830</name>
</gene>
<comment type="function">
    <text evidence="1">Catalyzes the cyclization of GTP to (8S)-3',8-cyclo-7,8-dihydroguanosine 5'-triphosphate.</text>
</comment>
<comment type="catalytic activity">
    <reaction evidence="1">
        <text>GTP + AH2 + S-adenosyl-L-methionine = (8S)-3',8-cyclo-7,8-dihydroguanosine 5'-triphosphate + 5'-deoxyadenosine + L-methionine + A + H(+)</text>
        <dbReference type="Rhea" id="RHEA:49576"/>
        <dbReference type="ChEBI" id="CHEBI:13193"/>
        <dbReference type="ChEBI" id="CHEBI:15378"/>
        <dbReference type="ChEBI" id="CHEBI:17319"/>
        <dbReference type="ChEBI" id="CHEBI:17499"/>
        <dbReference type="ChEBI" id="CHEBI:37565"/>
        <dbReference type="ChEBI" id="CHEBI:57844"/>
        <dbReference type="ChEBI" id="CHEBI:59789"/>
        <dbReference type="ChEBI" id="CHEBI:131766"/>
        <dbReference type="EC" id="4.1.99.22"/>
    </reaction>
</comment>
<comment type="cofactor">
    <cofactor evidence="1">
        <name>[4Fe-4S] cluster</name>
        <dbReference type="ChEBI" id="CHEBI:49883"/>
    </cofactor>
    <text evidence="1">Binds 2 [4Fe-4S] clusters. Binds 1 [4Fe-4S] cluster coordinated with 3 cysteines and an exchangeable S-adenosyl-L-methionine and 1 [4Fe-4S] cluster coordinated with 3 cysteines and the GTP-derived substrate.</text>
</comment>
<comment type="pathway">
    <text evidence="1">Cofactor biosynthesis; molybdopterin biosynthesis.</text>
</comment>
<comment type="similarity">
    <text evidence="1">Belongs to the radical SAM superfamily. MoaA family.</text>
</comment>
<keyword id="KW-0004">4Fe-4S</keyword>
<keyword id="KW-0342">GTP-binding</keyword>
<keyword id="KW-0408">Iron</keyword>
<keyword id="KW-0411">Iron-sulfur</keyword>
<keyword id="KW-0456">Lyase</keyword>
<keyword id="KW-0479">Metal-binding</keyword>
<keyword id="KW-0501">Molybdenum cofactor biosynthesis</keyword>
<keyword id="KW-0547">Nucleotide-binding</keyword>
<keyword id="KW-1185">Reference proteome</keyword>
<keyword id="KW-0949">S-adenosyl-L-methionine</keyword>
<accession>Q971H1</accession>